<comment type="subunit">
    <text evidence="1">Part of the 30S ribosomal subunit.</text>
</comment>
<comment type="subcellular location">
    <subcellularLocation>
        <location>Plastid</location>
        <location>Chloroplast</location>
    </subcellularLocation>
</comment>
<comment type="similarity">
    <text evidence="2">Belongs to the universal ribosomal protein uS3 family.</text>
</comment>
<organism>
    <name type="scientific">Chlorokybus atmophyticus</name>
    <name type="common">Soil alga</name>
    <dbReference type="NCBI Taxonomy" id="3144"/>
    <lineage>
        <taxon>Eukaryota</taxon>
        <taxon>Viridiplantae</taxon>
        <taxon>Streptophyta</taxon>
        <taxon>Chlorokybophyceae</taxon>
        <taxon>Chlorokybales</taxon>
        <taxon>Chlorokybaceae</taxon>
        <taxon>Chlorokybus</taxon>
    </lineage>
</organism>
<reference key="1">
    <citation type="journal article" date="2007" name="BMC Biol.">
        <title>A clade uniting the green algae Mesostigma viride and Chlorokybus atmophyticus represents the deepest branch of the Streptophyta in chloroplast genome-based phylogenies.</title>
        <authorList>
            <person name="Lemieux C."/>
            <person name="Otis C."/>
            <person name="Turmel M."/>
        </authorList>
    </citation>
    <scope>NUCLEOTIDE SEQUENCE [LARGE SCALE GENOMIC DNA]</scope>
    <source>
        <strain>SAG 48.80</strain>
    </source>
</reference>
<feature type="chain" id="PRO_0000293940" description="Small ribosomal subunit protein uS3c">
    <location>
        <begin position="1"/>
        <end position="217"/>
    </location>
</feature>
<feature type="domain" description="KH type-2">
    <location>
        <begin position="39"/>
        <end position="109"/>
    </location>
</feature>
<geneLocation type="chloroplast"/>
<name>RR3_CHLAT</name>
<gene>
    <name type="primary">rps3</name>
</gene>
<dbReference type="EMBL" id="DQ422812">
    <property type="protein sequence ID" value="ABD62251.2"/>
    <property type="molecule type" value="Genomic_DNA"/>
</dbReference>
<dbReference type="RefSeq" id="YP_001019089.1">
    <property type="nucleotide sequence ID" value="NC_008822.1"/>
</dbReference>
<dbReference type="SMR" id="Q19VB0"/>
<dbReference type="GeneID" id="4783308"/>
<dbReference type="GO" id="GO:0009507">
    <property type="term" value="C:chloroplast"/>
    <property type="evidence" value="ECO:0007669"/>
    <property type="project" value="UniProtKB-SubCell"/>
</dbReference>
<dbReference type="GO" id="GO:0022627">
    <property type="term" value="C:cytosolic small ribosomal subunit"/>
    <property type="evidence" value="ECO:0007669"/>
    <property type="project" value="TreeGrafter"/>
</dbReference>
<dbReference type="GO" id="GO:0019843">
    <property type="term" value="F:rRNA binding"/>
    <property type="evidence" value="ECO:0007669"/>
    <property type="project" value="UniProtKB-UniRule"/>
</dbReference>
<dbReference type="GO" id="GO:0003735">
    <property type="term" value="F:structural constituent of ribosome"/>
    <property type="evidence" value="ECO:0007669"/>
    <property type="project" value="InterPro"/>
</dbReference>
<dbReference type="GO" id="GO:0006412">
    <property type="term" value="P:translation"/>
    <property type="evidence" value="ECO:0007669"/>
    <property type="project" value="UniProtKB-UniRule"/>
</dbReference>
<dbReference type="CDD" id="cd02412">
    <property type="entry name" value="KH-II_30S_S3"/>
    <property type="match status" value="1"/>
</dbReference>
<dbReference type="FunFam" id="3.30.300.20:FF:000001">
    <property type="entry name" value="30S ribosomal protein S3"/>
    <property type="match status" value="1"/>
</dbReference>
<dbReference type="Gene3D" id="3.30.300.20">
    <property type="match status" value="1"/>
</dbReference>
<dbReference type="Gene3D" id="3.30.1140.32">
    <property type="entry name" value="Ribosomal protein S3, C-terminal domain"/>
    <property type="match status" value="1"/>
</dbReference>
<dbReference type="HAMAP" id="MF_01309_B">
    <property type="entry name" value="Ribosomal_uS3_B"/>
    <property type="match status" value="1"/>
</dbReference>
<dbReference type="InterPro" id="IPR015946">
    <property type="entry name" value="KH_dom-like_a/b"/>
</dbReference>
<dbReference type="InterPro" id="IPR004044">
    <property type="entry name" value="KH_dom_type_2"/>
</dbReference>
<dbReference type="InterPro" id="IPR009019">
    <property type="entry name" value="KH_sf_prok-type"/>
</dbReference>
<dbReference type="InterPro" id="IPR036419">
    <property type="entry name" value="Ribosomal_S3_C_sf"/>
</dbReference>
<dbReference type="InterPro" id="IPR005704">
    <property type="entry name" value="Ribosomal_uS3_bac-typ"/>
</dbReference>
<dbReference type="InterPro" id="IPR001351">
    <property type="entry name" value="Ribosomal_uS3_C"/>
</dbReference>
<dbReference type="InterPro" id="IPR018280">
    <property type="entry name" value="Ribosomal_uS3_CS"/>
</dbReference>
<dbReference type="NCBIfam" id="TIGR01009">
    <property type="entry name" value="rpsC_bact"/>
    <property type="match status" value="1"/>
</dbReference>
<dbReference type="PANTHER" id="PTHR11760">
    <property type="entry name" value="30S/40S RIBOSOMAL PROTEIN S3"/>
    <property type="match status" value="1"/>
</dbReference>
<dbReference type="PANTHER" id="PTHR11760:SF19">
    <property type="entry name" value="SMALL RIBOSOMAL SUBUNIT PROTEIN US3C"/>
    <property type="match status" value="1"/>
</dbReference>
<dbReference type="Pfam" id="PF07650">
    <property type="entry name" value="KH_2"/>
    <property type="match status" value="1"/>
</dbReference>
<dbReference type="Pfam" id="PF00189">
    <property type="entry name" value="Ribosomal_S3_C"/>
    <property type="match status" value="1"/>
</dbReference>
<dbReference type="SUPFAM" id="SSF54814">
    <property type="entry name" value="Prokaryotic type KH domain (KH-domain type II)"/>
    <property type="match status" value="1"/>
</dbReference>
<dbReference type="SUPFAM" id="SSF54821">
    <property type="entry name" value="Ribosomal protein S3 C-terminal domain"/>
    <property type="match status" value="1"/>
</dbReference>
<dbReference type="PROSITE" id="PS50823">
    <property type="entry name" value="KH_TYPE_2"/>
    <property type="match status" value="1"/>
</dbReference>
<dbReference type="PROSITE" id="PS00548">
    <property type="entry name" value="RIBOSOMAL_S3"/>
    <property type="match status" value="1"/>
</dbReference>
<proteinExistence type="inferred from homology"/>
<protein>
    <recommendedName>
        <fullName evidence="2">Small ribosomal subunit protein uS3c</fullName>
    </recommendedName>
    <alternativeName>
        <fullName>30S ribosomal protein S3, chloroplastic</fullName>
    </alternativeName>
</protein>
<keyword id="KW-0150">Chloroplast</keyword>
<keyword id="KW-0934">Plastid</keyword>
<keyword id="KW-0687">Ribonucleoprotein</keyword>
<keyword id="KW-0689">Ribosomal protein</keyword>
<keyword id="KW-0694">RNA-binding</keyword>
<keyword id="KW-0699">rRNA-binding</keyword>
<accession>Q19VB0</accession>
<sequence>MGQKIHPLGFRLGITQDHRSHWFAKPAQYRQLLQEDNSIRNFLRTKLINAGIARIDIQRKADQVEIEVRTARPGLIVGRSGKGVENLLRDLQEQFKNKRRFRITITYIPEPDLESTLIAEFIAQRLEARAPFRRAMRQAIQRATRAGVEGIKIQVAGRLNGAEIARSEWVREGRVPLQTLRANIDYSYCQAKTIYGILGIKVWMFKGEKFSSKAVTT</sequence>
<evidence type="ECO:0000250" key="1"/>
<evidence type="ECO:0000305" key="2"/>